<accession>Q97F64</accession>
<gene>
    <name evidence="1" type="primary">rpmE</name>
    <name type="ordered locus">CA_C2888</name>
</gene>
<sequence length="70" mass="7925">MQKDIQPEYHQDAVVKCACGNTFTTGSTKKELKVDICSKCHPFFTGQQKIVDVGGRVEKFRKKYNLSADK</sequence>
<protein>
    <recommendedName>
        <fullName evidence="1">Large ribosomal subunit protein bL31</fullName>
    </recommendedName>
    <alternativeName>
        <fullName evidence="2">50S ribosomal protein L31</fullName>
    </alternativeName>
</protein>
<reference key="1">
    <citation type="journal article" date="2001" name="J. Bacteriol.">
        <title>Genome sequence and comparative analysis of the solvent-producing bacterium Clostridium acetobutylicum.</title>
        <authorList>
            <person name="Noelling J."/>
            <person name="Breton G."/>
            <person name="Omelchenko M.V."/>
            <person name="Makarova K.S."/>
            <person name="Zeng Q."/>
            <person name="Gibson R."/>
            <person name="Lee H.M."/>
            <person name="Dubois J."/>
            <person name="Qiu D."/>
            <person name="Hitti J."/>
            <person name="Wolf Y.I."/>
            <person name="Tatusov R.L."/>
            <person name="Sabathe F."/>
            <person name="Doucette-Stamm L.A."/>
            <person name="Soucaille P."/>
            <person name="Daly M.J."/>
            <person name="Bennett G.N."/>
            <person name="Koonin E.V."/>
            <person name="Smith D.R."/>
        </authorList>
    </citation>
    <scope>NUCLEOTIDE SEQUENCE [LARGE SCALE GENOMIC DNA]</scope>
    <source>
        <strain>ATCC 824 / DSM 792 / JCM 1419 / IAM 19013 / LMG 5710 / NBRC 13948 / NRRL B-527 / VKM B-1787 / 2291 / W</strain>
    </source>
</reference>
<evidence type="ECO:0000255" key="1">
    <source>
        <dbReference type="HAMAP-Rule" id="MF_00501"/>
    </source>
</evidence>
<evidence type="ECO:0000305" key="2"/>
<keyword id="KW-0479">Metal-binding</keyword>
<keyword id="KW-1185">Reference proteome</keyword>
<keyword id="KW-0687">Ribonucleoprotein</keyword>
<keyword id="KW-0689">Ribosomal protein</keyword>
<keyword id="KW-0694">RNA-binding</keyword>
<keyword id="KW-0699">rRNA-binding</keyword>
<keyword id="KW-0862">Zinc</keyword>
<organism>
    <name type="scientific">Clostridium acetobutylicum (strain ATCC 824 / DSM 792 / JCM 1419 / IAM 19013 / LMG 5710 / NBRC 13948 / NRRL B-527 / VKM B-1787 / 2291 / W)</name>
    <dbReference type="NCBI Taxonomy" id="272562"/>
    <lineage>
        <taxon>Bacteria</taxon>
        <taxon>Bacillati</taxon>
        <taxon>Bacillota</taxon>
        <taxon>Clostridia</taxon>
        <taxon>Eubacteriales</taxon>
        <taxon>Clostridiaceae</taxon>
        <taxon>Clostridium</taxon>
    </lineage>
</organism>
<feature type="chain" id="PRO_0000173096" description="Large ribosomal subunit protein bL31">
    <location>
        <begin position="1"/>
        <end position="70"/>
    </location>
</feature>
<feature type="binding site" evidence="1">
    <location>
        <position position="17"/>
    </location>
    <ligand>
        <name>Zn(2+)</name>
        <dbReference type="ChEBI" id="CHEBI:29105"/>
    </ligand>
</feature>
<feature type="binding site" evidence="1">
    <location>
        <position position="19"/>
    </location>
    <ligand>
        <name>Zn(2+)</name>
        <dbReference type="ChEBI" id="CHEBI:29105"/>
    </ligand>
</feature>
<feature type="binding site" evidence="1">
    <location>
        <position position="37"/>
    </location>
    <ligand>
        <name>Zn(2+)</name>
        <dbReference type="ChEBI" id="CHEBI:29105"/>
    </ligand>
</feature>
<feature type="binding site" evidence="1">
    <location>
        <position position="40"/>
    </location>
    <ligand>
        <name>Zn(2+)</name>
        <dbReference type="ChEBI" id="CHEBI:29105"/>
    </ligand>
</feature>
<dbReference type="EMBL" id="AE001437">
    <property type="protein sequence ID" value="AAK80831.1"/>
    <property type="molecule type" value="Genomic_DNA"/>
</dbReference>
<dbReference type="PIR" id="D97255">
    <property type="entry name" value="D97255"/>
</dbReference>
<dbReference type="RefSeq" id="NP_349491.1">
    <property type="nucleotide sequence ID" value="NC_003030.1"/>
</dbReference>
<dbReference type="RefSeq" id="WP_010966172.1">
    <property type="nucleotide sequence ID" value="NC_003030.1"/>
</dbReference>
<dbReference type="SMR" id="Q97F64"/>
<dbReference type="STRING" id="272562.CA_C2888"/>
<dbReference type="GeneID" id="44999376"/>
<dbReference type="KEGG" id="cac:CA_C2888"/>
<dbReference type="PATRIC" id="fig|272562.8.peg.3072"/>
<dbReference type="eggNOG" id="COG0254">
    <property type="taxonomic scope" value="Bacteria"/>
</dbReference>
<dbReference type="HOGENOM" id="CLU_114306_4_3_9"/>
<dbReference type="OrthoDB" id="9803251at2"/>
<dbReference type="Proteomes" id="UP000000814">
    <property type="component" value="Chromosome"/>
</dbReference>
<dbReference type="GO" id="GO:1990904">
    <property type="term" value="C:ribonucleoprotein complex"/>
    <property type="evidence" value="ECO:0007669"/>
    <property type="project" value="UniProtKB-KW"/>
</dbReference>
<dbReference type="GO" id="GO:0005840">
    <property type="term" value="C:ribosome"/>
    <property type="evidence" value="ECO:0007669"/>
    <property type="project" value="UniProtKB-KW"/>
</dbReference>
<dbReference type="GO" id="GO:0046872">
    <property type="term" value="F:metal ion binding"/>
    <property type="evidence" value="ECO:0007669"/>
    <property type="project" value="UniProtKB-KW"/>
</dbReference>
<dbReference type="GO" id="GO:0019843">
    <property type="term" value="F:rRNA binding"/>
    <property type="evidence" value="ECO:0007669"/>
    <property type="project" value="UniProtKB-KW"/>
</dbReference>
<dbReference type="GO" id="GO:0003735">
    <property type="term" value="F:structural constituent of ribosome"/>
    <property type="evidence" value="ECO:0007669"/>
    <property type="project" value="InterPro"/>
</dbReference>
<dbReference type="GO" id="GO:0006412">
    <property type="term" value="P:translation"/>
    <property type="evidence" value="ECO:0007669"/>
    <property type="project" value="UniProtKB-UniRule"/>
</dbReference>
<dbReference type="Gene3D" id="4.10.830.30">
    <property type="entry name" value="Ribosomal protein L31"/>
    <property type="match status" value="1"/>
</dbReference>
<dbReference type="HAMAP" id="MF_00501">
    <property type="entry name" value="Ribosomal_bL31_1"/>
    <property type="match status" value="1"/>
</dbReference>
<dbReference type="InterPro" id="IPR034704">
    <property type="entry name" value="Ribosomal_bL28/bL31-like_sf"/>
</dbReference>
<dbReference type="InterPro" id="IPR002150">
    <property type="entry name" value="Ribosomal_bL31"/>
</dbReference>
<dbReference type="InterPro" id="IPR027491">
    <property type="entry name" value="Ribosomal_bL31_A"/>
</dbReference>
<dbReference type="InterPro" id="IPR042105">
    <property type="entry name" value="Ribosomal_bL31_sf"/>
</dbReference>
<dbReference type="NCBIfam" id="TIGR00105">
    <property type="entry name" value="L31"/>
    <property type="match status" value="1"/>
</dbReference>
<dbReference type="NCBIfam" id="NF000612">
    <property type="entry name" value="PRK00019.1"/>
    <property type="match status" value="1"/>
</dbReference>
<dbReference type="NCBIfam" id="NF001809">
    <property type="entry name" value="PRK00528.1"/>
    <property type="match status" value="1"/>
</dbReference>
<dbReference type="PANTHER" id="PTHR33280">
    <property type="entry name" value="50S RIBOSOMAL PROTEIN L31, CHLOROPLASTIC"/>
    <property type="match status" value="1"/>
</dbReference>
<dbReference type="PANTHER" id="PTHR33280:SF1">
    <property type="entry name" value="LARGE RIBOSOMAL SUBUNIT PROTEIN BL31C"/>
    <property type="match status" value="1"/>
</dbReference>
<dbReference type="Pfam" id="PF01197">
    <property type="entry name" value="Ribosomal_L31"/>
    <property type="match status" value="1"/>
</dbReference>
<dbReference type="PRINTS" id="PR01249">
    <property type="entry name" value="RIBOSOMALL31"/>
</dbReference>
<dbReference type="SUPFAM" id="SSF143800">
    <property type="entry name" value="L28p-like"/>
    <property type="match status" value="1"/>
</dbReference>
<dbReference type="PROSITE" id="PS01143">
    <property type="entry name" value="RIBOSOMAL_L31"/>
    <property type="match status" value="1"/>
</dbReference>
<comment type="function">
    <text evidence="1">Binds the 23S rRNA.</text>
</comment>
<comment type="cofactor">
    <cofactor evidence="1">
        <name>Zn(2+)</name>
        <dbReference type="ChEBI" id="CHEBI:29105"/>
    </cofactor>
    <text evidence="1">Binds 1 zinc ion per subunit.</text>
</comment>
<comment type="subunit">
    <text evidence="1">Part of the 50S ribosomal subunit.</text>
</comment>
<comment type="similarity">
    <text evidence="1">Belongs to the bacterial ribosomal protein bL31 family. Type A subfamily.</text>
</comment>
<proteinExistence type="inferred from homology"/>
<name>RL31_CLOAB</name>